<feature type="chain" id="PRO_1000046084" description="Ribosomal protein L11 methyltransferase">
    <location>
        <begin position="1"/>
        <end position="293"/>
    </location>
</feature>
<feature type="binding site" evidence="1">
    <location>
        <position position="145"/>
    </location>
    <ligand>
        <name>S-adenosyl-L-methionine</name>
        <dbReference type="ChEBI" id="CHEBI:59789"/>
    </ligand>
</feature>
<feature type="binding site" evidence="1">
    <location>
        <position position="166"/>
    </location>
    <ligand>
        <name>S-adenosyl-L-methionine</name>
        <dbReference type="ChEBI" id="CHEBI:59789"/>
    </ligand>
</feature>
<feature type="binding site" evidence="1">
    <location>
        <position position="188"/>
    </location>
    <ligand>
        <name>S-adenosyl-L-methionine</name>
        <dbReference type="ChEBI" id="CHEBI:59789"/>
    </ligand>
</feature>
<feature type="binding site" evidence="1">
    <location>
        <position position="230"/>
    </location>
    <ligand>
        <name>S-adenosyl-L-methionine</name>
        <dbReference type="ChEBI" id="CHEBI:59789"/>
    </ligand>
</feature>
<sequence length="293" mass="32523">MPWIQLRINTNSDDAETISDLLMEEGSVSITFEDGKDTPIFEPKLGETPLWRDTVVVALFDAETDLTPTIAMLKTLPFLGENFSHKVEQIEDKDWVREWMDNFHPIQFGTRLWICPSWREIPDPTAVNVILDPGLAFGTGTHPTTALCLEWLDSLDLSNEEVIDFGCGSGILAVAALKLGAKNVTGIDIDYQAIDASRANAERNDVADKLALYLPEDQPADLKADVLVANILAGPLRELAPLIAERVKTGGKLALSGLLKEQAQEISDFYSQWFDMDAAVHKEDWSRLTGKRK</sequence>
<proteinExistence type="inferred from homology"/>
<accession>A3D9J5</accession>
<reference key="1">
    <citation type="submission" date="2007-02" db="EMBL/GenBank/DDBJ databases">
        <title>Complete sequence of chromosome of Shewanella baltica OS155.</title>
        <authorList>
            <consortium name="US DOE Joint Genome Institute"/>
            <person name="Copeland A."/>
            <person name="Lucas S."/>
            <person name="Lapidus A."/>
            <person name="Barry K."/>
            <person name="Detter J.C."/>
            <person name="Glavina del Rio T."/>
            <person name="Hammon N."/>
            <person name="Israni S."/>
            <person name="Dalin E."/>
            <person name="Tice H."/>
            <person name="Pitluck S."/>
            <person name="Sims D.R."/>
            <person name="Brettin T."/>
            <person name="Bruce D."/>
            <person name="Han C."/>
            <person name="Tapia R."/>
            <person name="Brainard J."/>
            <person name="Schmutz J."/>
            <person name="Larimer F."/>
            <person name="Land M."/>
            <person name="Hauser L."/>
            <person name="Kyrpides N."/>
            <person name="Mikhailova N."/>
            <person name="Brettar I."/>
            <person name="Klappenbach J."/>
            <person name="Konstantinidis K."/>
            <person name="Rodrigues J."/>
            <person name="Tiedje J."/>
            <person name="Richardson P."/>
        </authorList>
    </citation>
    <scope>NUCLEOTIDE SEQUENCE [LARGE SCALE GENOMIC DNA]</scope>
    <source>
        <strain>OS155 / ATCC BAA-1091</strain>
    </source>
</reference>
<organism>
    <name type="scientific">Shewanella baltica (strain OS155 / ATCC BAA-1091)</name>
    <dbReference type="NCBI Taxonomy" id="325240"/>
    <lineage>
        <taxon>Bacteria</taxon>
        <taxon>Pseudomonadati</taxon>
        <taxon>Pseudomonadota</taxon>
        <taxon>Gammaproteobacteria</taxon>
        <taxon>Alteromonadales</taxon>
        <taxon>Shewanellaceae</taxon>
        <taxon>Shewanella</taxon>
    </lineage>
</organism>
<name>PRMA_SHEB5</name>
<evidence type="ECO:0000255" key="1">
    <source>
        <dbReference type="HAMAP-Rule" id="MF_00735"/>
    </source>
</evidence>
<keyword id="KW-0963">Cytoplasm</keyword>
<keyword id="KW-0489">Methyltransferase</keyword>
<keyword id="KW-1185">Reference proteome</keyword>
<keyword id="KW-0949">S-adenosyl-L-methionine</keyword>
<keyword id="KW-0808">Transferase</keyword>
<gene>
    <name evidence="1" type="primary">prmA</name>
    <name type="ordered locus">Sbal_3938</name>
</gene>
<protein>
    <recommendedName>
        <fullName evidence="1">Ribosomal protein L11 methyltransferase</fullName>
        <shortName evidence="1">L11 Mtase</shortName>
        <ecNumber evidence="1">2.1.1.-</ecNumber>
    </recommendedName>
</protein>
<comment type="function">
    <text evidence="1">Methylates ribosomal protein L11.</text>
</comment>
<comment type="catalytic activity">
    <reaction evidence="1">
        <text>L-lysyl-[protein] + 3 S-adenosyl-L-methionine = N(6),N(6),N(6)-trimethyl-L-lysyl-[protein] + 3 S-adenosyl-L-homocysteine + 3 H(+)</text>
        <dbReference type="Rhea" id="RHEA:54192"/>
        <dbReference type="Rhea" id="RHEA-COMP:9752"/>
        <dbReference type="Rhea" id="RHEA-COMP:13826"/>
        <dbReference type="ChEBI" id="CHEBI:15378"/>
        <dbReference type="ChEBI" id="CHEBI:29969"/>
        <dbReference type="ChEBI" id="CHEBI:57856"/>
        <dbReference type="ChEBI" id="CHEBI:59789"/>
        <dbReference type="ChEBI" id="CHEBI:61961"/>
    </reaction>
</comment>
<comment type="subcellular location">
    <subcellularLocation>
        <location evidence="1">Cytoplasm</location>
    </subcellularLocation>
</comment>
<comment type="similarity">
    <text evidence="1">Belongs to the methyltransferase superfamily. PrmA family.</text>
</comment>
<dbReference type="EC" id="2.1.1.-" evidence="1"/>
<dbReference type="EMBL" id="CP000563">
    <property type="protein sequence ID" value="ABN63408.1"/>
    <property type="molecule type" value="Genomic_DNA"/>
</dbReference>
<dbReference type="RefSeq" id="WP_011848017.1">
    <property type="nucleotide sequence ID" value="NC_009052.1"/>
</dbReference>
<dbReference type="SMR" id="A3D9J5"/>
<dbReference type="STRING" id="325240.Sbal_3938"/>
<dbReference type="KEGG" id="sbl:Sbal_3938"/>
<dbReference type="HOGENOM" id="CLU_049382_4_1_6"/>
<dbReference type="OrthoDB" id="9785995at2"/>
<dbReference type="Proteomes" id="UP000001557">
    <property type="component" value="Chromosome"/>
</dbReference>
<dbReference type="GO" id="GO:0005829">
    <property type="term" value="C:cytosol"/>
    <property type="evidence" value="ECO:0007669"/>
    <property type="project" value="TreeGrafter"/>
</dbReference>
<dbReference type="GO" id="GO:0016279">
    <property type="term" value="F:protein-lysine N-methyltransferase activity"/>
    <property type="evidence" value="ECO:0007669"/>
    <property type="project" value="TreeGrafter"/>
</dbReference>
<dbReference type="GO" id="GO:0032259">
    <property type="term" value="P:methylation"/>
    <property type="evidence" value="ECO:0007669"/>
    <property type="project" value="UniProtKB-KW"/>
</dbReference>
<dbReference type="CDD" id="cd02440">
    <property type="entry name" value="AdoMet_MTases"/>
    <property type="match status" value="1"/>
</dbReference>
<dbReference type="Gene3D" id="3.40.50.150">
    <property type="entry name" value="Vaccinia Virus protein VP39"/>
    <property type="match status" value="1"/>
</dbReference>
<dbReference type="HAMAP" id="MF_00735">
    <property type="entry name" value="Methyltr_PrmA"/>
    <property type="match status" value="1"/>
</dbReference>
<dbReference type="InterPro" id="IPR050078">
    <property type="entry name" value="Ribosomal_L11_MeTrfase_PrmA"/>
</dbReference>
<dbReference type="InterPro" id="IPR004498">
    <property type="entry name" value="Ribosomal_PrmA_MeTrfase"/>
</dbReference>
<dbReference type="InterPro" id="IPR029063">
    <property type="entry name" value="SAM-dependent_MTases_sf"/>
</dbReference>
<dbReference type="NCBIfam" id="TIGR00406">
    <property type="entry name" value="prmA"/>
    <property type="match status" value="1"/>
</dbReference>
<dbReference type="PANTHER" id="PTHR43648">
    <property type="entry name" value="ELECTRON TRANSFER FLAVOPROTEIN BETA SUBUNIT LYSINE METHYLTRANSFERASE"/>
    <property type="match status" value="1"/>
</dbReference>
<dbReference type="PANTHER" id="PTHR43648:SF1">
    <property type="entry name" value="ELECTRON TRANSFER FLAVOPROTEIN BETA SUBUNIT LYSINE METHYLTRANSFERASE"/>
    <property type="match status" value="1"/>
</dbReference>
<dbReference type="Pfam" id="PF06325">
    <property type="entry name" value="PrmA"/>
    <property type="match status" value="1"/>
</dbReference>
<dbReference type="PIRSF" id="PIRSF000401">
    <property type="entry name" value="RPL11_MTase"/>
    <property type="match status" value="1"/>
</dbReference>
<dbReference type="SUPFAM" id="SSF53335">
    <property type="entry name" value="S-adenosyl-L-methionine-dependent methyltransferases"/>
    <property type="match status" value="1"/>
</dbReference>